<name>SYFA_BACC3</name>
<keyword id="KW-0030">Aminoacyl-tRNA synthetase</keyword>
<keyword id="KW-0067">ATP-binding</keyword>
<keyword id="KW-0963">Cytoplasm</keyword>
<keyword id="KW-0436">Ligase</keyword>
<keyword id="KW-0460">Magnesium</keyword>
<keyword id="KW-0479">Metal-binding</keyword>
<keyword id="KW-0547">Nucleotide-binding</keyword>
<keyword id="KW-0648">Protein biosynthesis</keyword>
<organism>
    <name type="scientific">Bacillus cereus (strain 03BB102)</name>
    <dbReference type="NCBI Taxonomy" id="572264"/>
    <lineage>
        <taxon>Bacteria</taxon>
        <taxon>Bacillati</taxon>
        <taxon>Bacillota</taxon>
        <taxon>Bacilli</taxon>
        <taxon>Bacillales</taxon>
        <taxon>Bacillaceae</taxon>
        <taxon>Bacillus</taxon>
        <taxon>Bacillus cereus group</taxon>
    </lineage>
</organism>
<dbReference type="EC" id="6.1.1.20" evidence="1"/>
<dbReference type="EMBL" id="CP001407">
    <property type="protein sequence ID" value="ACO27977.1"/>
    <property type="molecule type" value="Genomic_DNA"/>
</dbReference>
<dbReference type="RefSeq" id="WP_000388219.1">
    <property type="nucleotide sequence ID" value="NZ_CP009318.1"/>
</dbReference>
<dbReference type="SMR" id="C1EU00"/>
<dbReference type="GeneID" id="83638271"/>
<dbReference type="KEGG" id="bcx:BCA_4667"/>
<dbReference type="PATRIC" id="fig|572264.18.peg.4616"/>
<dbReference type="Proteomes" id="UP000002210">
    <property type="component" value="Chromosome"/>
</dbReference>
<dbReference type="GO" id="GO:0005737">
    <property type="term" value="C:cytoplasm"/>
    <property type="evidence" value="ECO:0007669"/>
    <property type="project" value="UniProtKB-SubCell"/>
</dbReference>
<dbReference type="GO" id="GO:0005524">
    <property type="term" value="F:ATP binding"/>
    <property type="evidence" value="ECO:0007669"/>
    <property type="project" value="UniProtKB-UniRule"/>
</dbReference>
<dbReference type="GO" id="GO:0140096">
    <property type="term" value="F:catalytic activity, acting on a protein"/>
    <property type="evidence" value="ECO:0007669"/>
    <property type="project" value="UniProtKB-ARBA"/>
</dbReference>
<dbReference type="GO" id="GO:0000287">
    <property type="term" value="F:magnesium ion binding"/>
    <property type="evidence" value="ECO:0007669"/>
    <property type="project" value="UniProtKB-UniRule"/>
</dbReference>
<dbReference type="GO" id="GO:0004826">
    <property type="term" value="F:phenylalanine-tRNA ligase activity"/>
    <property type="evidence" value="ECO:0007669"/>
    <property type="project" value="UniProtKB-UniRule"/>
</dbReference>
<dbReference type="GO" id="GO:0016740">
    <property type="term" value="F:transferase activity"/>
    <property type="evidence" value="ECO:0007669"/>
    <property type="project" value="UniProtKB-ARBA"/>
</dbReference>
<dbReference type="GO" id="GO:0000049">
    <property type="term" value="F:tRNA binding"/>
    <property type="evidence" value="ECO:0007669"/>
    <property type="project" value="InterPro"/>
</dbReference>
<dbReference type="GO" id="GO:0006432">
    <property type="term" value="P:phenylalanyl-tRNA aminoacylation"/>
    <property type="evidence" value="ECO:0007669"/>
    <property type="project" value="UniProtKB-UniRule"/>
</dbReference>
<dbReference type="CDD" id="cd00496">
    <property type="entry name" value="PheRS_alpha_core"/>
    <property type="match status" value="1"/>
</dbReference>
<dbReference type="FunFam" id="3.30.930.10:FF:000003">
    <property type="entry name" value="Phenylalanine--tRNA ligase alpha subunit"/>
    <property type="match status" value="1"/>
</dbReference>
<dbReference type="Gene3D" id="3.30.930.10">
    <property type="entry name" value="Bira Bifunctional Protein, Domain 2"/>
    <property type="match status" value="1"/>
</dbReference>
<dbReference type="HAMAP" id="MF_00281">
    <property type="entry name" value="Phe_tRNA_synth_alpha1"/>
    <property type="match status" value="1"/>
</dbReference>
<dbReference type="InterPro" id="IPR006195">
    <property type="entry name" value="aa-tRNA-synth_II"/>
</dbReference>
<dbReference type="InterPro" id="IPR045864">
    <property type="entry name" value="aa-tRNA-synth_II/BPL/LPL"/>
</dbReference>
<dbReference type="InterPro" id="IPR004529">
    <property type="entry name" value="Phe-tRNA-synth_IIc_asu"/>
</dbReference>
<dbReference type="InterPro" id="IPR004188">
    <property type="entry name" value="Phe-tRNA_ligase_II_N"/>
</dbReference>
<dbReference type="InterPro" id="IPR022911">
    <property type="entry name" value="Phe_tRNA_ligase_alpha1_bac"/>
</dbReference>
<dbReference type="InterPro" id="IPR002319">
    <property type="entry name" value="Phenylalanyl-tRNA_Synthase"/>
</dbReference>
<dbReference type="InterPro" id="IPR010978">
    <property type="entry name" value="tRNA-bd_arm"/>
</dbReference>
<dbReference type="NCBIfam" id="TIGR00468">
    <property type="entry name" value="pheS"/>
    <property type="match status" value="1"/>
</dbReference>
<dbReference type="PANTHER" id="PTHR11538:SF41">
    <property type="entry name" value="PHENYLALANINE--TRNA LIGASE, MITOCHONDRIAL"/>
    <property type="match status" value="1"/>
</dbReference>
<dbReference type="PANTHER" id="PTHR11538">
    <property type="entry name" value="PHENYLALANYL-TRNA SYNTHETASE"/>
    <property type="match status" value="1"/>
</dbReference>
<dbReference type="Pfam" id="PF02912">
    <property type="entry name" value="Phe_tRNA-synt_N"/>
    <property type="match status" value="1"/>
</dbReference>
<dbReference type="Pfam" id="PF01409">
    <property type="entry name" value="tRNA-synt_2d"/>
    <property type="match status" value="1"/>
</dbReference>
<dbReference type="SUPFAM" id="SSF55681">
    <property type="entry name" value="Class II aaRS and biotin synthetases"/>
    <property type="match status" value="1"/>
</dbReference>
<dbReference type="SUPFAM" id="SSF46589">
    <property type="entry name" value="tRNA-binding arm"/>
    <property type="match status" value="1"/>
</dbReference>
<dbReference type="PROSITE" id="PS50862">
    <property type="entry name" value="AA_TRNA_LIGASE_II"/>
    <property type="match status" value="1"/>
</dbReference>
<feature type="chain" id="PRO_1000199297" description="Phenylalanine--tRNA ligase alpha subunit">
    <location>
        <begin position="1"/>
        <end position="344"/>
    </location>
</feature>
<feature type="binding site" evidence="1">
    <location>
        <position position="256"/>
    </location>
    <ligand>
        <name>Mg(2+)</name>
        <dbReference type="ChEBI" id="CHEBI:18420"/>
        <note>shared with beta subunit</note>
    </ligand>
</feature>
<proteinExistence type="inferred from homology"/>
<sequence>MEARLKELKQKALELIEEAKELKGLNDVRVAYLGKKGPITEVLRGMGKLSAEERPRMGALVNEVREAIQTRLDDKISNLEKAVIEAKLATETIDVTLPGRPVETGCHHPLTAVVEQIEDVFIGMGYEVAEGTEVEKDYYNFEALNLPKDHPARDMQDTFYITEETLLRTHTSSVQARTMENNKEKGPIKIICPGKVYRRDDDDATHSHQFMQIEGLVIDKNIRMSDLKGTLQVFVKKMFGEDREIRLRPSFFPFTEPSVEMDISCMMCHGKGCGTCKGTGWIEILGAGMVHPNVLEMAGYDSKEYQGFAFGMGAERIAMLKYGVDDIRHFYTNDVRFLQQFKRA</sequence>
<accession>C1EU00</accession>
<reference key="1">
    <citation type="submission" date="2009-02" db="EMBL/GenBank/DDBJ databases">
        <title>Genome sequence of Bacillus cereus 03BB102.</title>
        <authorList>
            <person name="Dodson R.J."/>
            <person name="Jackson P."/>
            <person name="Munk A.C."/>
            <person name="Brettin T."/>
            <person name="Bruce D."/>
            <person name="Detter C."/>
            <person name="Tapia R."/>
            <person name="Han C."/>
            <person name="Sutton G."/>
            <person name="Sims D."/>
        </authorList>
    </citation>
    <scope>NUCLEOTIDE SEQUENCE [LARGE SCALE GENOMIC DNA]</scope>
    <source>
        <strain>03BB102</strain>
    </source>
</reference>
<protein>
    <recommendedName>
        <fullName evidence="1">Phenylalanine--tRNA ligase alpha subunit</fullName>
        <ecNumber evidence="1">6.1.1.20</ecNumber>
    </recommendedName>
    <alternativeName>
        <fullName evidence="1">Phenylalanyl-tRNA synthetase alpha subunit</fullName>
        <shortName evidence="1">PheRS</shortName>
    </alternativeName>
</protein>
<evidence type="ECO:0000255" key="1">
    <source>
        <dbReference type="HAMAP-Rule" id="MF_00281"/>
    </source>
</evidence>
<comment type="catalytic activity">
    <reaction evidence="1">
        <text>tRNA(Phe) + L-phenylalanine + ATP = L-phenylalanyl-tRNA(Phe) + AMP + diphosphate + H(+)</text>
        <dbReference type="Rhea" id="RHEA:19413"/>
        <dbReference type="Rhea" id="RHEA-COMP:9668"/>
        <dbReference type="Rhea" id="RHEA-COMP:9699"/>
        <dbReference type="ChEBI" id="CHEBI:15378"/>
        <dbReference type="ChEBI" id="CHEBI:30616"/>
        <dbReference type="ChEBI" id="CHEBI:33019"/>
        <dbReference type="ChEBI" id="CHEBI:58095"/>
        <dbReference type="ChEBI" id="CHEBI:78442"/>
        <dbReference type="ChEBI" id="CHEBI:78531"/>
        <dbReference type="ChEBI" id="CHEBI:456215"/>
        <dbReference type="EC" id="6.1.1.20"/>
    </reaction>
</comment>
<comment type="cofactor">
    <cofactor evidence="1">
        <name>Mg(2+)</name>
        <dbReference type="ChEBI" id="CHEBI:18420"/>
    </cofactor>
    <text evidence="1">Binds 2 magnesium ions per tetramer.</text>
</comment>
<comment type="subunit">
    <text evidence="1">Tetramer of two alpha and two beta subunits.</text>
</comment>
<comment type="subcellular location">
    <subcellularLocation>
        <location evidence="1">Cytoplasm</location>
    </subcellularLocation>
</comment>
<comment type="similarity">
    <text evidence="1">Belongs to the class-II aminoacyl-tRNA synthetase family. Phe-tRNA synthetase alpha subunit type 1 subfamily.</text>
</comment>
<gene>
    <name evidence="1" type="primary">pheS</name>
    <name type="ordered locus">BCA_4667</name>
</gene>